<keyword id="KW-0031">Aminopeptidase</keyword>
<keyword id="KW-0963">Cytoplasm</keyword>
<keyword id="KW-0378">Hydrolase</keyword>
<keyword id="KW-0479">Metal-binding</keyword>
<keyword id="KW-0482">Metalloprotease</keyword>
<keyword id="KW-0645">Protease</keyword>
<keyword id="KW-0862">Zinc</keyword>
<protein>
    <recommendedName>
        <fullName evidence="1">Peptidase T</fullName>
        <ecNumber evidence="1">3.4.11.4</ecNumber>
    </recommendedName>
    <alternativeName>
        <fullName evidence="1">Aminotripeptidase</fullName>
        <shortName evidence="1">Tripeptidase</shortName>
    </alternativeName>
    <alternativeName>
        <fullName evidence="1">Tripeptide aminopeptidase</fullName>
    </alternativeName>
</protein>
<name>PEPT_STAA9</name>
<organism>
    <name type="scientific">Staphylococcus aureus (strain JH9)</name>
    <dbReference type="NCBI Taxonomy" id="359786"/>
    <lineage>
        <taxon>Bacteria</taxon>
        <taxon>Bacillati</taxon>
        <taxon>Bacillota</taxon>
        <taxon>Bacilli</taxon>
        <taxon>Bacillales</taxon>
        <taxon>Staphylococcaceae</taxon>
        <taxon>Staphylococcus</taxon>
    </lineage>
</organism>
<comment type="function">
    <text evidence="1">Cleaves the N-terminal amino acid of tripeptides.</text>
</comment>
<comment type="catalytic activity">
    <reaction evidence="1">
        <text>Release of the N-terminal residue from a tripeptide.</text>
        <dbReference type="EC" id="3.4.11.4"/>
    </reaction>
</comment>
<comment type="cofactor">
    <cofactor evidence="1">
        <name>Zn(2+)</name>
        <dbReference type="ChEBI" id="CHEBI:29105"/>
    </cofactor>
    <text evidence="1">Binds 2 Zn(2+) ions per subunit.</text>
</comment>
<comment type="subcellular location">
    <subcellularLocation>
        <location evidence="1">Cytoplasm</location>
    </subcellularLocation>
</comment>
<comment type="similarity">
    <text evidence="1">Belongs to the peptidase M20B family.</text>
</comment>
<dbReference type="EC" id="3.4.11.4" evidence="1"/>
<dbReference type="EMBL" id="CP000703">
    <property type="protein sequence ID" value="ABQ48570.1"/>
    <property type="molecule type" value="Genomic_DNA"/>
</dbReference>
<dbReference type="RefSeq" id="WP_000795811.1">
    <property type="nucleotide sequence ID" value="NC_009487.1"/>
</dbReference>
<dbReference type="SMR" id="A5IQU7"/>
<dbReference type="MEROPS" id="M20.003"/>
<dbReference type="KEGG" id="saj:SaurJH9_0767"/>
<dbReference type="HOGENOM" id="CLU_053676_0_0_9"/>
<dbReference type="GO" id="GO:0005829">
    <property type="term" value="C:cytosol"/>
    <property type="evidence" value="ECO:0007669"/>
    <property type="project" value="TreeGrafter"/>
</dbReference>
<dbReference type="GO" id="GO:0008237">
    <property type="term" value="F:metallopeptidase activity"/>
    <property type="evidence" value="ECO:0007669"/>
    <property type="project" value="UniProtKB-KW"/>
</dbReference>
<dbReference type="GO" id="GO:0045148">
    <property type="term" value="F:tripeptide aminopeptidase activity"/>
    <property type="evidence" value="ECO:0007669"/>
    <property type="project" value="UniProtKB-UniRule"/>
</dbReference>
<dbReference type="GO" id="GO:0008270">
    <property type="term" value="F:zinc ion binding"/>
    <property type="evidence" value="ECO:0007669"/>
    <property type="project" value="UniProtKB-UniRule"/>
</dbReference>
<dbReference type="GO" id="GO:0043171">
    <property type="term" value="P:peptide catabolic process"/>
    <property type="evidence" value="ECO:0007669"/>
    <property type="project" value="UniProtKB-UniRule"/>
</dbReference>
<dbReference type="GO" id="GO:0006508">
    <property type="term" value="P:proteolysis"/>
    <property type="evidence" value="ECO:0007669"/>
    <property type="project" value="UniProtKB-UniRule"/>
</dbReference>
<dbReference type="CDD" id="cd03892">
    <property type="entry name" value="M20_peptT"/>
    <property type="match status" value="1"/>
</dbReference>
<dbReference type="FunFam" id="3.30.70.360:FF:000002">
    <property type="entry name" value="Peptidase T"/>
    <property type="match status" value="1"/>
</dbReference>
<dbReference type="Gene3D" id="3.30.70.360">
    <property type="match status" value="1"/>
</dbReference>
<dbReference type="Gene3D" id="3.40.630.10">
    <property type="entry name" value="Zn peptidases"/>
    <property type="match status" value="1"/>
</dbReference>
<dbReference type="HAMAP" id="MF_00550">
    <property type="entry name" value="Aminopeptidase_M20"/>
    <property type="match status" value="1"/>
</dbReference>
<dbReference type="InterPro" id="IPR001261">
    <property type="entry name" value="ArgE/DapE_CS"/>
</dbReference>
<dbReference type="InterPro" id="IPR036264">
    <property type="entry name" value="Bact_exopeptidase_dim_dom"/>
</dbReference>
<dbReference type="InterPro" id="IPR002933">
    <property type="entry name" value="Peptidase_M20"/>
</dbReference>
<dbReference type="InterPro" id="IPR011650">
    <property type="entry name" value="Peptidase_M20_dimer"/>
</dbReference>
<dbReference type="InterPro" id="IPR010161">
    <property type="entry name" value="Peptidase_M20B"/>
</dbReference>
<dbReference type="NCBIfam" id="TIGR01882">
    <property type="entry name" value="peptidase-T"/>
    <property type="match status" value="1"/>
</dbReference>
<dbReference type="NCBIfam" id="NF003976">
    <property type="entry name" value="PRK05469.1"/>
    <property type="match status" value="1"/>
</dbReference>
<dbReference type="NCBIfam" id="NF009920">
    <property type="entry name" value="PRK13381.1"/>
    <property type="match status" value="1"/>
</dbReference>
<dbReference type="PANTHER" id="PTHR42994">
    <property type="entry name" value="PEPTIDASE T"/>
    <property type="match status" value="1"/>
</dbReference>
<dbReference type="PANTHER" id="PTHR42994:SF1">
    <property type="entry name" value="PEPTIDASE T"/>
    <property type="match status" value="1"/>
</dbReference>
<dbReference type="Pfam" id="PF07687">
    <property type="entry name" value="M20_dimer"/>
    <property type="match status" value="1"/>
</dbReference>
<dbReference type="Pfam" id="PF01546">
    <property type="entry name" value="Peptidase_M20"/>
    <property type="match status" value="1"/>
</dbReference>
<dbReference type="PIRSF" id="PIRSF037215">
    <property type="entry name" value="Peptidase_M20B"/>
    <property type="match status" value="1"/>
</dbReference>
<dbReference type="SUPFAM" id="SSF55031">
    <property type="entry name" value="Bacterial exopeptidase dimerisation domain"/>
    <property type="match status" value="1"/>
</dbReference>
<dbReference type="SUPFAM" id="SSF53187">
    <property type="entry name" value="Zn-dependent exopeptidases"/>
    <property type="match status" value="1"/>
</dbReference>
<dbReference type="PROSITE" id="PS00758">
    <property type="entry name" value="ARGE_DAPE_CPG2_1"/>
    <property type="match status" value="1"/>
</dbReference>
<dbReference type="PROSITE" id="PS00759">
    <property type="entry name" value="ARGE_DAPE_CPG2_2"/>
    <property type="match status" value="1"/>
</dbReference>
<accession>A5IQU7</accession>
<reference key="1">
    <citation type="submission" date="2007-05" db="EMBL/GenBank/DDBJ databases">
        <title>Complete sequence of chromosome of Staphylococcus aureus subsp. aureus JH9.</title>
        <authorList>
            <consortium name="US DOE Joint Genome Institute"/>
            <person name="Copeland A."/>
            <person name="Lucas S."/>
            <person name="Lapidus A."/>
            <person name="Barry K."/>
            <person name="Detter J.C."/>
            <person name="Glavina del Rio T."/>
            <person name="Hammon N."/>
            <person name="Israni S."/>
            <person name="Pitluck S."/>
            <person name="Chain P."/>
            <person name="Malfatti S."/>
            <person name="Shin M."/>
            <person name="Vergez L."/>
            <person name="Schmutz J."/>
            <person name="Larimer F."/>
            <person name="Land M."/>
            <person name="Hauser L."/>
            <person name="Kyrpides N."/>
            <person name="Kim E."/>
            <person name="Tomasz A."/>
            <person name="Richardson P."/>
        </authorList>
    </citation>
    <scope>NUCLEOTIDE SEQUENCE [LARGE SCALE GENOMIC DNA]</scope>
    <source>
        <strain>JH9</strain>
    </source>
</reference>
<proteinExistence type="inferred from homology"/>
<evidence type="ECO:0000255" key="1">
    <source>
        <dbReference type="HAMAP-Rule" id="MF_00550"/>
    </source>
</evidence>
<feature type="chain" id="PRO_1000081963" description="Peptidase T">
    <location>
        <begin position="1"/>
        <end position="408"/>
    </location>
</feature>
<feature type="active site" evidence="1">
    <location>
        <position position="80"/>
    </location>
</feature>
<feature type="active site" description="Proton acceptor" evidence="1">
    <location>
        <position position="174"/>
    </location>
</feature>
<feature type="binding site" evidence="1">
    <location>
        <position position="78"/>
    </location>
    <ligand>
        <name>Zn(2+)</name>
        <dbReference type="ChEBI" id="CHEBI:29105"/>
        <label>1</label>
    </ligand>
</feature>
<feature type="binding site" evidence="1">
    <location>
        <position position="140"/>
    </location>
    <ligand>
        <name>Zn(2+)</name>
        <dbReference type="ChEBI" id="CHEBI:29105"/>
        <label>1</label>
    </ligand>
</feature>
<feature type="binding site" evidence="1">
    <location>
        <position position="140"/>
    </location>
    <ligand>
        <name>Zn(2+)</name>
        <dbReference type="ChEBI" id="CHEBI:29105"/>
        <label>2</label>
    </ligand>
</feature>
<feature type="binding site" evidence="1">
    <location>
        <position position="175"/>
    </location>
    <ligand>
        <name>Zn(2+)</name>
        <dbReference type="ChEBI" id="CHEBI:29105"/>
        <label>2</label>
    </ligand>
</feature>
<feature type="binding site" evidence="1">
    <location>
        <position position="197"/>
    </location>
    <ligand>
        <name>Zn(2+)</name>
        <dbReference type="ChEBI" id="CHEBI:29105"/>
        <label>1</label>
    </ligand>
</feature>
<feature type="binding site" evidence="1">
    <location>
        <position position="379"/>
    </location>
    <ligand>
        <name>Zn(2+)</name>
        <dbReference type="ChEBI" id="CHEBI:29105"/>
        <label>2</label>
    </ligand>
</feature>
<sequence length="408" mass="45820">MKNQLIDRLTRYTTIDTQSDPKSTTTPSTEKQWDLLHLLEKELQQLGLPTDLDENGYLFATLESNIDADVPTVGFLAHVDTSPDFNASNVKPQIIENYDGKPYKLGNTKRVLDPKVFPELNSLVGHTLMVTDGTSLLGADDKAGIVEIMEAICYLQEHPEIKHGTIRIGFTPDEEIGRGPHKFDVDRFNADFAYTMDGSQYGELQYESFNAAEAVITCHGVNVHPGSAKNAMVNAIRLGEQFDSLLPDSEVPERTEGYEGFYHLMNFEGTVEKATLQYIIRDHDKKQFELRKKRILEIRDDINAHFENYPVKVDISDQYFNMAEKILPLPHIIDIPKRVFAKLDIPANTEPIRGGTDGSQLSFMGLPTPNIFTGCGNFHGPYEYASIDVMEKAVQVIIGIVEDIAENH</sequence>
<gene>
    <name evidence="1" type="primary">pepT</name>
    <name type="ordered locus">SaurJH9_0767</name>
</gene>